<feature type="chain" id="PRO_1000089023" description="Argininosuccinate synthase">
    <location>
        <begin position="1"/>
        <end position="412"/>
    </location>
</feature>
<feature type="binding site" evidence="1">
    <location>
        <begin position="10"/>
        <end position="18"/>
    </location>
    <ligand>
        <name>ATP</name>
        <dbReference type="ChEBI" id="CHEBI:30616"/>
    </ligand>
</feature>
<feature type="binding site" evidence="1">
    <location>
        <position position="89"/>
    </location>
    <ligand>
        <name>L-citrulline</name>
        <dbReference type="ChEBI" id="CHEBI:57743"/>
    </ligand>
</feature>
<feature type="binding site" evidence="1">
    <location>
        <position position="119"/>
    </location>
    <ligand>
        <name>ATP</name>
        <dbReference type="ChEBI" id="CHEBI:30616"/>
    </ligand>
</feature>
<feature type="binding site" evidence="1">
    <location>
        <position position="121"/>
    </location>
    <ligand>
        <name>L-aspartate</name>
        <dbReference type="ChEBI" id="CHEBI:29991"/>
    </ligand>
</feature>
<feature type="binding site" evidence="1">
    <location>
        <position position="125"/>
    </location>
    <ligand>
        <name>L-aspartate</name>
        <dbReference type="ChEBI" id="CHEBI:29991"/>
    </ligand>
</feature>
<feature type="binding site" evidence="1">
    <location>
        <position position="125"/>
    </location>
    <ligand>
        <name>L-citrulline</name>
        <dbReference type="ChEBI" id="CHEBI:57743"/>
    </ligand>
</feature>
<feature type="binding site" evidence="1">
    <location>
        <position position="126"/>
    </location>
    <ligand>
        <name>L-aspartate</name>
        <dbReference type="ChEBI" id="CHEBI:29991"/>
    </ligand>
</feature>
<feature type="binding site" evidence="1">
    <location>
        <position position="129"/>
    </location>
    <ligand>
        <name>L-citrulline</name>
        <dbReference type="ChEBI" id="CHEBI:57743"/>
    </ligand>
</feature>
<feature type="binding site" evidence="1">
    <location>
        <position position="177"/>
    </location>
    <ligand>
        <name>L-citrulline</name>
        <dbReference type="ChEBI" id="CHEBI:57743"/>
    </ligand>
</feature>
<feature type="binding site" evidence="1">
    <location>
        <position position="261"/>
    </location>
    <ligand>
        <name>L-citrulline</name>
        <dbReference type="ChEBI" id="CHEBI:57743"/>
    </ligand>
</feature>
<feature type="binding site" evidence="1">
    <location>
        <position position="273"/>
    </location>
    <ligand>
        <name>L-citrulline</name>
        <dbReference type="ChEBI" id="CHEBI:57743"/>
    </ligand>
</feature>
<comment type="catalytic activity">
    <reaction evidence="1">
        <text>L-citrulline + L-aspartate + ATP = 2-(N(omega)-L-arginino)succinate + AMP + diphosphate + H(+)</text>
        <dbReference type="Rhea" id="RHEA:10932"/>
        <dbReference type="ChEBI" id="CHEBI:15378"/>
        <dbReference type="ChEBI" id="CHEBI:29991"/>
        <dbReference type="ChEBI" id="CHEBI:30616"/>
        <dbReference type="ChEBI" id="CHEBI:33019"/>
        <dbReference type="ChEBI" id="CHEBI:57472"/>
        <dbReference type="ChEBI" id="CHEBI:57743"/>
        <dbReference type="ChEBI" id="CHEBI:456215"/>
        <dbReference type="EC" id="6.3.4.5"/>
    </reaction>
</comment>
<comment type="pathway">
    <text evidence="1">Amino-acid biosynthesis; L-arginine biosynthesis; L-arginine from L-ornithine and carbamoyl phosphate: step 2/3.</text>
</comment>
<comment type="subunit">
    <text evidence="1">Homotetramer.</text>
</comment>
<comment type="subcellular location">
    <subcellularLocation>
        <location evidence="1">Cytoplasm</location>
    </subcellularLocation>
</comment>
<comment type="similarity">
    <text evidence="1">Belongs to the argininosuccinate synthase family. Type 1 subfamily.</text>
</comment>
<proteinExistence type="inferred from homology"/>
<evidence type="ECO:0000255" key="1">
    <source>
        <dbReference type="HAMAP-Rule" id="MF_00005"/>
    </source>
</evidence>
<organism>
    <name type="scientific">Bifidobacterium longum (strain DJO10A)</name>
    <dbReference type="NCBI Taxonomy" id="205913"/>
    <lineage>
        <taxon>Bacteria</taxon>
        <taxon>Bacillati</taxon>
        <taxon>Actinomycetota</taxon>
        <taxon>Actinomycetes</taxon>
        <taxon>Bifidobacteriales</taxon>
        <taxon>Bifidobacteriaceae</taxon>
        <taxon>Bifidobacterium</taxon>
    </lineage>
</organism>
<sequence>MADNKRIVLAYSGGLDTSVAISYLKERTGKDVVAVSLDVGQGGESLETIKQRALACGAVESYVVDARDEFANEYCMKALKANAMYEGVYPLVSAISRPLISKHLVRAAHQFGADTISHGCTGKGNDQVRFEVSIASIDPTLKAISPIRDLSLTRDVEIAFAKEHKLPITQTEKSPYSIDQNVWGRAIETGFLEDPWNGPTKDCYSYTDDPAFPPVEDEVVIEFKEGVPVKIDGRDVTPLQAIEEMNRRAGAQGVGRIDLIEDRLVGIKSRELYEAPGAVALITAHQELENCCLEREQHRIKRDIDKRWGELVYDAQWFSPATQSLNAFIEDTQKYVSGEIRMVLHGGRAVVTGRRSDSSLYDYKLATYDSGDTFDQKSSNGFIDIYGLPSRVAAARDVKFGNGIEVPENTVE</sequence>
<keyword id="KW-0028">Amino-acid biosynthesis</keyword>
<keyword id="KW-0055">Arginine biosynthesis</keyword>
<keyword id="KW-0067">ATP-binding</keyword>
<keyword id="KW-0963">Cytoplasm</keyword>
<keyword id="KW-0436">Ligase</keyword>
<keyword id="KW-0547">Nucleotide-binding</keyword>
<gene>
    <name evidence="1" type="primary">argG</name>
    <name type="ordered locus">BLD_0810</name>
</gene>
<name>ASSY_BIFLD</name>
<reference key="1">
    <citation type="journal article" date="2008" name="BMC Genomics">
        <title>Comparative genomic analysis of the gut bacterium Bifidobacterium longum reveals loci susceptible to deletion during pure culture growth.</title>
        <authorList>
            <person name="Lee J.H."/>
            <person name="Karamychev V.N."/>
            <person name="Kozyavkin S.A."/>
            <person name="Mills D."/>
            <person name="Pavlov A.R."/>
            <person name="Pavlova N.V."/>
            <person name="Polouchine N.N."/>
            <person name="Richardson P.M."/>
            <person name="Shakhova V.V."/>
            <person name="Slesarev A.I."/>
            <person name="Weimer B."/>
            <person name="O'Sullivan D.J."/>
        </authorList>
    </citation>
    <scope>NUCLEOTIDE SEQUENCE [LARGE SCALE GENOMIC DNA]</scope>
    <source>
        <strain>DJO10A</strain>
    </source>
</reference>
<protein>
    <recommendedName>
        <fullName evidence="1">Argininosuccinate synthase</fullName>
        <ecNumber evidence="1">6.3.4.5</ecNumber>
    </recommendedName>
    <alternativeName>
        <fullName evidence="1">Citrulline--aspartate ligase</fullName>
    </alternativeName>
</protein>
<accession>B3DSY7</accession>
<dbReference type="EC" id="6.3.4.5" evidence="1"/>
<dbReference type="EMBL" id="CP000605">
    <property type="protein sequence ID" value="ACD98256.1"/>
    <property type="molecule type" value="Genomic_DNA"/>
</dbReference>
<dbReference type="RefSeq" id="WP_007051163.1">
    <property type="nucleotide sequence ID" value="NZ_AABM02000002.1"/>
</dbReference>
<dbReference type="SMR" id="B3DSY7"/>
<dbReference type="KEGG" id="blj:BLD_0810"/>
<dbReference type="HOGENOM" id="CLU_032784_4_2_11"/>
<dbReference type="UniPathway" id="UPA00068">
    <property type="reaction ID" value="UER00113"/>
</dbReference>
<dbReference type="Proteomes" id="UP000002419">
    <property type="component" value="Chromosome"/>
</dbReference>
<dbReference type="GO" id="GO:0005737">
    <property type="term" value="C:cytoplasm"/>
    <property type="evidence" value="ECO:0007669"/>
    <property type="project" value="UniProtKB-SubCell"/>
</dbReference>
<dbReference type="GO" id="GO:0004055">
    <property type="term" value="F:argininosuccinate synthase activity"/>
    <property type="evidence" value="ECO:0007669"/>
    <property type="project" value="UniProtKB-UniRule"/>
</dbReference>
<dbReference type="GO" id="GO:0005524">
    <property type="term" value="F:ATP binding"/>
    <property type="evidence" value="ECO:0007669"/>
    <property type="project" value="UniProtKB-UniRule"/>
</dbReference>
<dbReference type="GO" id="GO:0000053">
    <property type="term" value="P:argininosuccinate metabolic process"/>
    <property type="evidence" value="ECO:0007669"/>
    <property type="project" value="TreeGrafter"/>
</dbReference>
<dbReference type="GO" id="GO:0006526">
    <property type="term" value="P:L-arginine biosynthetic process"/>
    <property type="evidence" value="ECO:0007669"/>
    <property type="project" value="UniProtKB-UniRule"/>
</dbReference>
<dbReference type="GO" id="GO:0000050">
    <property type="term" value="P:urea cycle"/>
    <property type="evidence" value="ECO:0007669"/>
    <property type="project" value="TreeGrafter"/>
</dbReference>
<dbReference type="CDD" id="cd01999">
    <property type="entry name" value="ASS"/>
    <property type="match status" value="1"/>
</dbReference>
<dbReference type="FunFam" id="3.40.50.620:FF:000038">
    <property type="entry name" value="Argininosuccinate synthase"/>
    <property type="match status" value="1"/>
</dbReference>
<dbReference type="FunFam" id="3.90.1260.10:FF:000007">
    <property type="entry name" value="Argininosuccinate synthase"/>
    <property type="match status" value="1"/>
</dbReference>
<dbReference type="Gene3D" id="3.90.1260.10">
    <property type="entry name" value="Argininosuccinate synthetase, chain A, domain 2"/>
    <property type="match status" value="1"/>
</dbReference>
<dbReference type="Gene3D" id="3.40.50.620">
    <property type="entry name" value="HUPs"/>
    <property type="match status" value="1"/>
</dbReference>
<dbReference type="Gene3D" id="1.20.5.470">
    <property type="entry name" value="Single helix bin"/>
    <property type="match status" value="1"/>
</dbReference>
<dbReference type="HAMAP" id="MF_00005">
    <property type="entry name" value="Arg_succ_synth_type1"/>
    <property type="match status" value="1"/>
</dbReference>
<dbReference type="InterPro" id="IPR048268">
    <property type="entry name" value="Arginosuc_syn_C"/>
</dbReference>
<dbReference type="InterPro" id="IPR048267">
    <property type="entry name" value="Arginosuc_syn_N"/>
</dbReference>
<dbReference type="InterPro" id="IPR001518">
    <property type="entry name" value="Arginosuc_synth"/>
</dbReference>
<dbReference type="InterPro" id="IPR018223">
    <property type="entry name" value="Arginosuc_synth_CS"/>
</dbReference>
<dbReference type="InterPro" id="IPR023434">
    <property type="entry name" value="Arginosuc_synth_type_1_subfam"/>
</dbReference>
<dbReference type="InterPro" id="IPR024074">
    <property type="entry name" value="AS_cat/multimer_dom_body"/>
</dbReference>
<dbReference type="InterPro" id="IPR014729">
    <property type="entry name" value="Rossmann-like_a/b/a_fold"/>
</dbReference>
<dbReference type="NCBIfam" id="TIGR00032">
    <property type="entry name" value="argG"/>
    <property type="match status" value="1"/>
</dbReference>
<dbReference type="NCBIfam" id="NF001770">
    <property type="entry name" value="PRK00509.1"/>
    <property type="match status" value="1"/>
</dbReference>
<dbReference type="PANTHER" id="PTHR11587">
    <property type="entry name" value="ARGININOSUCCINATE SYNTHASE"/>
    <property type="match status" value="1"/>
</dbReference>
<dbReference type="PANTHER" id="PTHR11587:SF2">
    <property type="entry name" value="ARGININOSUCCINATE SYNTHASE"/>
    <property type="match status" value="1"/>
</dbReference>
<dbReference type="Pfam" id="PF20979">
    <property type="entry name" value="Arginosuc_syn_C"/>
    <property type="match status" value="1"/>
</dbReference>
<dbReference type="Pfam" id="PF00764">
    <property type="entry name" value="Arginosuc_synth"/>
    <property type="match status" value="1"/>
</dbReference>
<dbReference type="SUPFAM" id="SSF52402">
    <property type="entry name" value="Adenine nucleotide alpha hydrolases-like"/>
    <property type="match status" value="1"/>
</dbReference>
<dbReference type="SUPFAM" id="SSF69864">
    <property type="entry name" value="Argininosuccinate synthetase, C-terminal domain"/>
    <property type="match status" value="1"/>
</dbReference>
<dbReference type="PROSITE" id="PS00564">
    <property type="entry name" value="ARGININOSUCCIN_SYN_1"/>
    <property type="match status" value="1"/>
</dbReference>
<dbReference type="PROSITE" id="PS00565">
    <property type="entry name" value="ARGININOSUCCIN_SYN_2"/>
    <property type="match status" value="1"/>
</dbReference>